<reference key="1">
    <citation type="journal article" date="2007" name="Genome Biol.">
        <title>Comparison of Francisella tularensis genomes reveals evolutionary events associated with the emergence of human pathogenic strains.</title>
        <authorList>
            <person name="Rohmer L."/>
            <person name="Fong C."/>
            <person name="Abmayr S."/>
            <person name="Wasnick M."/>
            <person name="Larson Freeman T.J."/>
            <person name="Radey M."/>
            <person name="Guina T."/>
            <person name="Svensson K."/>
            <person name="Hayden H.S."/>
            <person name="Jacobs M."/>
            <person name="Gallagher L.A."/>
            <person name="Manoil C."/>
            <person name="Ernst R.K."/>
            <person name="Drees B."/>
            <person name="Buckley D."/>
            <person name="Haugen E."/>
            <person name="Bovee D."/>
            <person name="Zhou Y."/>
            <person name="Chang J."/>
            <person name="Levy R."/>
            <person name="Lim R."/>
            <person name="Gillett W."/>
            <person name="Guenthener D."/>
            <person name="Kang A."/>
            <person name="Shaffer S.A."/>
            <person name="Taylor G."/>
            <person name="Chen J."/>
            <person name="Gallis B."/>
            <person name="D'Argenio D.A."/>
            <person name="Forsman M."/>
            <person name="Olson M.V."/>
            <person name="Goodlett D.R."/>
            <person name="Kaul R."/>
            <person name="Miller S.I."/>
            <person name="Brittnacher M.J."/>
        </authorList>
    </citation>
    <scope>NUCLEOTIDE SEQUENCE [LARGE SCALE GENOMIC DNA]</scope>
    <source>
        <strain>U112</strain>
    </source>
</reference>
<evidence type="ECO:0000255" key="1">
    <source>
        <dbReference type="HAMAP-Rule" id="MF_00318"/>
    </source>
</evidence>
<organism>
    <name type="scientific">Francisella tularensis subsp. novicida (strain U112)</name>
    <dbReference type="NCBI Taxonomy" id="401614"/>
    <lineage>
        <taxon>Bacteria</taxon>
        <taxon>Pseudomonadati</taxon>
        <taxon>Pseudomonadota</taxon>
        <taxon>Gammaproteobacteria</taxon>
        <taxon>Thiotrichales</taxon>
        <taxon>Francisellaceae</taxon>
        <taxon>Francisella</taxon>
    </lineage>
</organism>
<name>ENO_FRATN</name>
<sequence>MSSQIKQVFARQILDSRGNPTVEVDVVLESGAFGRAAVPSGASTGIREALELRDGNKALFLGKSVYKAVENVNTKIAQAVKGLDALDQRLIDKTMIELDGSENKKNLGANAILGVSLATARAAASHLRKPFYRYLMDVKEYLMPVPMMNVINGGSHADNNVDMQEFMIVPAGFDTFSEALRCGTEVFHTLKKVLIADGYSVAGVGDEGGYAPDLPSNEAAIEAILKAVKEAGYEPGKHVFIALDPASSEFYKDGKYELKSENKSLTSEEMIDYYAAWVEKYPIVSIEDGLAEEDWAGWKLLTEKLGNKVQLVGDDLFVTNPSILAKGIEKGIANSILIKLNQIGTLTETFEAMAMAGQAGYTCVVSHRSGETSDTIIADLAVATCSGQIKTGSLSRSDRIAKYNQLLRIEEELGENAIYPGIKAFVFNSDEEVEEDVQEIIVEDSEAEKVVVQVEE</sequence>
<gene>
    <name evidence="1" type="primary">eno</name>
    <name type="ordered locus">FTN_0621</name>
</gene>
<keyword id="KW-0963">Cytoplasm</keyword>
<keyword id="KW-0324">Glycolysis</keyword>
<keyword id="KW-0456">Lyase</keyword>
<keyword id="KW-0460">Magnesium</keyword>
<keyword id="KW-0479">Metal-binding</keyword>
<keyword id="KW-0964">Secreted</keyword>
<feature type="chain" id="PRO_0000280848" description="Enolase">
    <location>
        <begin position="1"/>
        <end position="456"/>
    </location>
</feature>
<feature type="active site" description="Proton donor" evidence="1">
    <location>
        <position position="207"/>
    </location>
</feature>
<feature type="active site" description="Proton acceptor" evidence="1">
    <location>
        <position position="339"/>
    </location>
</feature>
<feature type="binding site" evidence="1">
    <location>
        <position position="164"/>
    </location>
    <ligand>
        <name>(2R)-2-phosphoglycerate</name>
        <dbReference type="ChEBI" id="CHEBI:58289"/>
    </ligand>
</feature>
<feature type="binding site" evidence="1">
    <location>
        <position position="244"/>
    </location>
    <ligand>
        <name>Mg(2+)</name>
        <dbReference type="ChEBI" id="CHEBI:18420"/>
    </ligand>
</feature>
<feature type="binding site" evidence="1">
    <location>
        <position position="287"/>
    </location>
    <ligand>
        <name>Mg(2+)</name>
        <dbReference type="ChEBI" id="CHEBI:18420"/>
    </ligand>
</feature>
<feature type="binding site" evidence="1">
    <location>
        <position position="314"/>
    </location>
    <ligand>
        <name>Mg(2+)</name>
        <dbReference type="ChEBI" id="CHEBI:18420"/>
    </ligand>
</feature>
<feature type="binding site" evidence="1">
    <location>
        <position position="339"/>
    </location>
    <ligand>
        <name>(2R)-2-phosphoglycerate</name>
        <dbReference type="ChEBI" id="CHEBI:58289"/>
    </ligand>
</feature>
<feature type="binding site" evidence="1">
    <location>
        <position position="368"/>
    </location>
    <ligand>
        <name>(2R)-2-phosphoglycerate</name>
        <dbReference type="ChEBI" id="CHEBI:58289"/>
    </ligand>
</feature>
<feature type="binding site" evidence="1">
    <location>
        <position position="369"/>
    </location>
    <ligand>
        <name>(2R)-2-phosphoglycerate</name>
        <dbReference type="ChEBI" id="CHEBI:58289"/>
    </ligand>
</feature>
<feature type="binding site" evidence="1">
    <location>
        <position position="390"/>
    </location>
    <ligand>
        <name>(2R)-2-phosphoglycerate</name>
        <dbReference type="ChEBI" id="CHEBI:58289"/>
    </ligand>
</feature>
<protein>
    <recommendedName>
        <fullName evidence="1">Enolase</fullName>
        <ecNumber evidence="1">4.2.1.11</ecNumber>
    </recommendedName>
    <alternativeName>
        <fullName evidence="1">2-phospho-D-glycerate hydro-lyase</fullName>
    </alternativeName>
    <alternativeName>
        <fullName evidence="1">2-phosphoglycerate dehydratase</fullName>
    </alternativeName>
</protein>
<dbReference type="EC" id="4.2.1.11" evidence="1"/>
<dbReference type="EMBL" id="CP000439">
    <property type="protein sequence ID" value="ABK89514.1"/>
    <property type="molecule type" value="Genomic_DNA"/>
</dbReference>
<dbReference type="RefSeq" id="WP_003035924.1">
    <property type="nucleotide sequence ID" value="NZ_CP009633.1"/>
</dbReference>
<dbReference type="SMR" id="A0Q5J9"/>
<dbReference type="GeneID" id="75263894"/>
<dbReference type="KEGG" id="ftn:FTN_0621"/>
<dbReference type="KEGG" id="ftx:AW25_1405"/>
<dbReference type="BioCyc" id="FTUL401614:G1G75-646-MONOMER"/>
<dbReference type="UniPathway" id="UPA00109">
    <property type="reaction ID" value="UER00187"/>
</dbReference>
<dbReference type="Proteomes" id="UP000000762">
    <property type="component" value="Chromosome"/>
</dbReference>
<dbReference type="GO" id="GO:0009986">
    <property type="term" value="C:cell surface"/>
    <property type="evidence" value="ECO:0007669"/>
    <property type="project" value="UniProtKB-SubCell"/>
</dbReference>
<dbReference type="GO" id="GO:0005576">
    <property type="term" value="C:extracellular region"/>
    <property type="evidence" value="ECO:0007669"/>
    <property type="project" value="UniProtKB-SubCell"/>
</dbReference>
<dbReference type="GO" id="GO:0000015">
    <property type="term" value="C:phosphopyruvate hydratase complex"/>
    <property type="evidence" value="ECO:0007669"/>
    <property type="project" value="InterPro"/>
</dbReference>
<dbReference type="GO" id="GO:0000287">
    <property type="term" value="F:magnesium ion binding"/>
    <property type="evidence" value="ECO:0007669"/>
    <property type="project" value="UniProtKB-UniRule"/>
</dbReference>
<dbReference type="GO" id="GO:0004634">
    <property type="term" value="F:phosphopyruvate hydratase activity"/>
    <property type="evidence" value="ECO:0007669"/>
    <property type="project" value="UniProtKB-UniRule"/>
</dbReference>
<dbReference type="GO" id="GO:0006096">
    <property type="term" value="P:glycolytic process"/>
    <property type="evidence" value="ECO:0007669"/>
    <property type="project" value="UniProtKB-UniRule"/>
</dbReference>
<dbReference type="CDD" id="cd03313">
    <property type="entry name" value="enolase"/>
    <property type="match status" value="1"/>
</dbReference>
<dbReference type="FunFam" id="3.20.20.120:FF:000001">
    <property type="entry name" value="Enolase"/>
    <property type="match status" value="1"/>
</dbReference>
<dbReference type="FunFam" id="3.30.390.10:FF:000001">
    <property type="entry name" value="Enolase"/>
    <property type="match status" value="1"/>
</dbReference>
<dbReference type="Gene3D" id="3.20.20.120">
    <property type="entry name" value="Enolase-like C-terminal domain"/>
    <property type="match status" value="1"/>
</dbReference>
<dbReference type="Gene3D" id="3.30.390.10">
    <property type="entry name" value="Enolase-like, N-terminal domain"/>
    <property type="match status" value="1"/>
</dbReference>
<dbReference type="HAMAP" id="MF_00318">
    <property type="entry name" value="Enolase"/>
    <property type="match status" value="1"/>
</dbReference>
<dbReference type="InterPro" id="IPR000941">
    <property type="entry name" value="Enolase"/>
</dbReference>
<dbReference type="InterPro" id="IPR036849">
    <property type="entry name" value="Enolase-like_C_sf"/>
</dbReference>
<dbReference type="InterPro" id="IPR029017">
    <property type="entry name" value="Enolase-like_N"/>
</dbReference>
<dbReference type="InterPro" id="IPR020810">
    <property type="entry name" value="Enolase_C"/>
</dbReference>
<dbReference type="InterPro" id="IPR020809">
    <property type="entry name" value="Enolase_CS"/>
</dbReference>
<dbReference type="InterPro" id="IPR020811">
    <property type="entry name" value="Enolase_N"/>
</dbReference>
<dbReference type="NCBIfam" id="TIGR01060">
    <property type="entry name" value="eno"/>
    <property type="match status" value="1"/>
</dbReference>
<dbReference type="PANTHER" id="PTHR11902">
    <property type="entry name" value="ENOLASE"/>
    <property type="match status" value="1"/>
</dbReference>
<dbReference type="PANTHER" id="PTHR11902:SF1">
    <property type="entry name" value="ENOLASE"/>
    <property type="match status" value="1"/>
</dbReference>
<dbReference type="Pfam" id="PF00113">
    <property type="entry name" value="Enolase_C"/>
    <property type="match status" value="1"/>
</dbReference>
<dbReference type="Pfam" id="PF03952">
    <property type="entry name" value="Enolase_N"/>
    <property type="match status" value="1"/>
</dbReference>
<dbReference type="PIRSF" id="PIRSF001400">
    <property type="entry name" value="Enolase"/>
    <property type="match status" value="1"/>
</dbReference>
<dbReference type="PRINTS" id="PR00148">
    <property type="entry name" value="ENOLASE"/>
</dbReference>
<dbReference type="SFLD" id="SFLDS00001">
    <property type="entry name" value="Enolase"/>
    <property type="match status" value="1"/>
</dbReference>
<dbReference type="SFLD" id="SFLDF00002">
    <property type="entry name" value="enolase"/>
    <property type="match status" value="1"/>
</dbReference>
<dbReference type="SMART" id="SM01192">
    <property type="entry name" value="Enolase_C"/>
    <property type="match status" value="1"/>
</dbReference>
<dbReference type="SMART" id="SM01193">
    <property type="entry name" value="Enolase_N"/>
    <property type="match status" value="1"/>
</dbReference>
<dbReference type="SUPFAM" id="SSF51604">
    <property type="entry name" value="Enolase C-terminal domain-like"/>
    <property type="match status" value="1"/>
</dbReference>
<dbReference type="SUPFAM" id="SSF54826">
    <property type="entry name" value="Enolase N-terminal domain-like"/>
    <property type="match status" value="1"/>
</dbReference>
<dbReference type="PROSITE" id="PS00164">
    <property type="entry name" value="ENOLASE"/>
    <property type="match status" value="1"/>
</dbReference>
<accession>A0Q5J9</accession>
<comment type="function">
    <text evidence="1">Catalyzes the reversible conversion of 2-phosphoglycerate (2-PG) into phosphoenolpyruvate (PEP). It is essential for the degradation of carbohydrates via glycolysis.</text>
</comment>
<comment type="catalytic activity">
    <reaction evidence="1">
        <text>(2R)-2-phosphoglycerate = phosphoenolpyruvate + H2O</text>
        <dbReference type="Rhea" id="RHEA:10164"/>
        <dbReference type="ChEBI" id="CHEBI:15377"/>
        <dbReference type="ChEBI" id="CHEBI:58289"/>
        <dbReference type="ChEBI" id="CHEBI:58702"/>
        <dbReference type="EC" id="4.2.1.11"/>
    </reaction>
</comment>
<comment type="cofactor">
    <cofactor evidence="1">
        <name>Mg(2+)</name>
        <dbReference type="ChEBI" id="CHEBI:18420"/>
    </cofactor>
    <text evidence="1">Binds a second Mg(2+) ion via substrate during catalysis.</text>
</comment>
<comment type="pathway">
    <text evidence="1">Carbohydrate degradation; glycolysis; pyruvate from D-glyceraldehyde 3-phosphate: step 4/5.</text>
</comment>
<comment type="subunit">
    <text evidence="1">Component of the RNA degradosome, a multiprotein complex involved in RNA processing and mRNA degradation.</text>
</comment>
<comment type="subcellular location">
    <subcellularLocation>
        <location evidence="1">Cytoplasm</location>
    </subcellularLocation>
    <subcellularLocation>
        <location evidence="1">Secreted</location>
    </subcellularLocation>
    <subcellularLocation>
        <location evidence="1">Cell surface</location>
    </subcellularLocation>
    <text evidence="1">Fractions of enolase are present in both the cytoplasm and on the cell surface.</text>
</comment>
<comment type="similarity">
    <text evidence="1">Belongs to the enolase family.</text>
</comment>
<proteinExistence type="inferred from homology"/>